<keyword id="KW-1185">Reference proteome</keyword>
<keyword id="KW-0687">Ribonucleoprotein</keyword>
<keyword id="KW-0689">Ribosomal protein</keyword>
<keyword id="KW-0694">RNA-binding</keyword>
<keyword id="KW-0699">rRNA-binding</keyword>
<sequence>MGQKVNPIGLRLGINRTADSRWYADSADFGRLLHEDISIRKAIREKLKQAGISKIIIERPHKKCLITIHTARPGLVIGKKGGDIEVLRKELAKMTSDEVRVNLVEIRKPEIDATLIADDIARQLERRASFRRAMKRSIQSAMRLGAEGVKVVVSGRLGGAEIARTEKYAEGSVPLHTLRADIDYGTAEATTTYGIIGVKVWVYKGEILEHDPMAQDKRLETSGQSRARANTNQRGPASGAQAAGA</sequence>
<feature type="chain" id="PRO_0000293804" description="Small ribosomal subunit protein uS3">
    <location>
        <begin position="1"/>
        <end position="245"/>
    </location>
</feature>
<feature type="domain" description="KH type-2" evidence="1">
    <location>
        <begin position="39"/>
        <end position="107"/>
    </location>
</feature>
<feature type="region of interest" description="Disordered" evidence="2">
    <location>
        <begin position="216"/>
        <end position="245"/>
    </location>
</feature>
<feature type="compositionally biased region" description="Polar residues" evidence="2">
    <location>
        <begin position="221"/>
        <end position="235"/>
    </location>
</feature>
<reference key="1">
    <citation type="journal article" date="2006" name="J. Bacteriol.">
        <title>Comparative genomic evidence for a close relationship between the dimorphic prosthecate bacteria Hyphomonas neptunium and Caulobacter crescentus.</title>
        <authorList>
            <person name="Badger J.H."/>
            <person name="Hoover T.R."/>
            <person name="Brun Y.V."/>
            <person name="Weiner R.M."/>
            <person name="Laub M.T."/>
            <person name="Alexandre G."/>
            <person name="Mrazek J."/>
            <person name="Ren Q."/>
            <person name="Paulsen I.T."/>
            <person name="Nelson K.E."/>
            <person name="Khouri H.M."/>
            <person name="Radune D."/>
            <person name="Sosa J."/>
            <person name="Dodson R.J."/>
            <person name="Sullivan S.A."/>
            <person name="Rosovitz M.J."/>
            <person name="Madupu R."/>
            <person name="Brinkac L.M."/>
            <person name="Durkin A.S."/>
            <person name="Daugherty S.C."/>
            <person name="Kothari S.P."/>
            <person name="Giglio M.G."/>
            <person name="Zhou L."/>
            <person name="Haft D.H."/>
            <person name="Selengut J.D."/>
            <person name="Davidsen T.M."/>
            <person name="Yang Q."/>
            <person name="Zafar N."/>
            <person name="Ward N.L."/>
        </authorList>
    </citation>
    <scope>NUCLEOTIDE SEQUENCE [LARGE SCALE GENOMIC DNA]</scope>
    <source>
        <strain>ATCC 15444</strain>
    </source>
</reference>
<organism>
    <name type="scientific">Hyphomonas neptunium (strain ATCC 15444)</name>
    <dbReference type="NCBI Taxonomy" id="228405"/>
    <lineage>
        <taxon>Bacteria</taxon>
        <taxon>Pseudomonadati</taxon>
        <taxon>Pseudomonadota</taxon>
        <taxon>Alphaproteobacteria</taxon>
        <taxon>Hyphomonadales</taxon>
        <taxon>Hyphomonadaceae</taxon>
        <taxon>Hyphomonas</taxon>
    </lineage>
</organism>
<dbReference type="EMBL" id="CP000158">
    <property type="protein sequence ID" value="ABI76121.1"/>
    <property type="molecule type" value="Genomic_DNA"/>
</dbReference>
<dbReference type="RefSeq" id="WP_011647820.1">
    <property type="nucleotide sequence ID" value="NC_008358.1"/>
</dbReference>
<dbReference type="SMR" id="Q0BYC0"/>
<dbReference type="STRING" id="228405.HNE_2845"/>
<dbReference type="KEGG" id="hne:HNE_2845"/>
<dbReference type="eggNOG" id="COG0092">
    <property type="taxonomic scope" value="Bacteria"/>
</dbReference>
<dbReference type="HOGENOM" id="CLU_058591_0_2_5"/>
<dbReference type="Proteomes" id="UP000001959">
    <property type="component" value="Chromosome"/>
</dbReference>
<dbReference type="GO" id="GO:0022627">
    <property type="term" value="C:cytosolic small ribosomal subunit"/>
    <property type="evidence" value="ECO:0007669"/>
    <property type="project" value="TreeGrafter"/>
</dbReference>
<dbReference type="GO" id="GO:0003729">
    <property type="term" value="F:mRNA binding"/>
    <property type="evidence" value="ECO:0007669"/>
    <property type="project" value="UniProtKB-UniRule"/>
</dbReference>
<dbReference type="GO" id="GO:0019843">
    <property type="term" value="F:rRNA binding"/>
    <property type="evidence" value="ECO:0007669"/>
    <property type="project" value="UniProtKB-UniRule"/>
</dbReference>
<dbReference type="GO" id="GO:0003735">
    <property type="term" value="F:structural constituent of ribosome"/>
    <property type="evidence" value="ECO:0007669"/>
    <property type="project" value="InterPro"/>
</dbReference>
<dbReference type="GO" id="GO:0006412">
    <property type="term" value="P:translation"/>
    <property type="evidence" value="ECO:0007669"/>
    <property type="project" value="UniProtKB-UniRule"/>
</dbReference>
<dbReference type="CDD" id="cd02412">
    <property type="entry name" value="KH-II_30S_S3"/>
    <property type="match status" value="1"/>
</dbReference>
<dbReference type="FunFam" id="3.30.300.20:FF:000001">
    <property type="entry name" value="30S ribosomal protein S3"/>
    <property type="match status" value="1"/>
</dbReference>
<dbReference type="Gene3D" id="3.30.300.20">
    <property type="match status" value="1"/>
</dbReference>
<dbReference type="Gene3D" id="3.30.1140.32">
    <property type="entry name" value="Ribosomal protein S3, C-terminal domain"/>
    <property type="match status" value="1"/>
</dbReference>
<dbReference type="HAMAP" id="MF_01309_B">
    <property type="entry name" value="Ribosomal_uS3_B"/>
    <property type="match status" value="1"/>
</dbReference>
<dbReference type="InterPro" id="IPR004087">
    <property type="entry name" value="KH_dom"/>
</dbReference>
<dbReference type="InterPro" id="IPR015946">
    <property type="entry name" value="KH_dom-like_a/b"/>
</dbReference>
<dbReference type="InterPro" id="IPR004044">
    <property type="entry name" value="KH_dom_type_2"/>
</dbReference>
<dbReference type="InterPro" id="IPR009019">
    <property type="entry name" value="KH_sf_prok-type"/>
</dbReference>
<dbReference type="InterPro" id="IPR036419">
    <property type="entry name" value="Ribosomal_S3_C_sf"/>
</dbReference>
<dbReference type="InterPro" id="IPR005704">
    <property type="entry name" value="Ribosomal_uS3_bac-typ"/>
</dbReference>
<dbReference type="InterPro" id="IPR001351">
    <property type="entry name" value="Ribosomal_uS3_C"/>
</dbReference>
<dbReference type="InterPro" id="IPR018280">
    <property type="entry name" value="Ribosomal_uS3_CS"/>
</dbReference>
<dbReference type="NCBIfam" id="TIGR01009">
    <property type="entry name" value="rpsC_bact"/>
    <property type="match status" value="1"/>
</dbReference>
<dbReference type="PANTHER" id="PTHR11760">
    <property type="entry name" value="30S/40S RIBOSOMAL PROTEIN S3"/>
    <property type="match status" value="1"/>
</dbReference>
<dbReference type="PANTHER" id="PTHR11760:SF19">
    <property type="entry name" value="SMALL RIBOSOMAL SUBUNIT PROTEIN US3C"/>
    <property type="match status" value="1"/>
</dbReference>
<dbReference type="Pfam" id="PF07650">
    <property type="entry name" value="KH_2"/>
    <property type="match status" value="1"/>
</dbReference>
<dbReference type="Pfam" id="PF00189">
    <property type="entry name" value="Ribosomal_S3_C"/>
    <property type="match status" value="1"/>
</dbReference>
<dbReference type="SMART" id="SM00322">
    <property type="entry name" value="KH"/>
    <property type="match status" value="1"/>
</dbReference>
<dbReference type="SUPFAM" id="SSF54814">
    <property type="entry name" value="Prokaryotic type KH domain (KH-domain type II)"/>
    <property type="match status" value="1"/>
</dbReference>
<dbReference type="SUPFAM" id="SSF54821">
    <property type="entry name" value="Ribosomal protein S3 C-terminal domain"/>
    <property type="match status" value="1"/>
</dbReference>
<dbReference type="PROSITE" id="PS50823">
    <property type="entry name" value="KH_TYPE_2"/>
    <property type="match status" value="1"/>
</dbReference>
<dbReference type="PROSITE" id="PS00548">
    <property type="entry name" value="RIBOSOMAL_S3"/>
    <property type="match status" value="1"/>
</dbReference>
<protein>
    <recommendedName>
        <fullName evidence="1">Small ribosomal subunit protein uS3</fullName>
    </recommendedName>
    <alternativeName>
        <fullName evidence="3">30S ribosomal protein S3</fullName>
    </alternativeName>
</protein>
<comment type="function">
    <text evidence="1">Binds the lower part of the 30S subunit head. Binds mRNA in the 70S ribosome, positioning it for translation.</text>
</comment>
<comment type="subunit">
    <text evidence="1">Part of the 30S ribosomal subunit. Forms a tight complex with proteins S10 and S14.</text>
</comment>
<comment type="similarity">
    <text evidence="1">Belongs to the universal ribosomal protein uS3 family.</text>
</comment>
<proteinExistence type="inferred from homology"/>
<gene>
    <name evidence="1" type="primary">rpsC</name>
    <name type="ordered locus">HNE_2845</name>
</gene>
<accession>Q0BYC0</accession>
<evidence type="ECO:0000255" key="1">
    <source>
        <dbReference type="HAMAP-Rule" id="MF_01309"/>
    </source>
</evidence>
<evidence type="ECO:0000256" key="2">
    <source>
        <dbReference type="SAM" id="MobiDB-lite"/>
    </source>
</evidence>
<evidence type="ECO:0000305" key="3"/>
<name>RS3_HYPNA</name>